<gene>
    <name type="ordered locus">DVU_1597</name>
</gene>
<dbReference type="EC" id="1.8.-.-"/>
<dbReference type="EMBL" id="M77241">
    <property type="protein sequence ID" value="AAA23383.1"/>
    <property type="molecule type" value="Genomic_DNA"/>
</dbReference>
<dbReference type="EMBL" id="AE017285">
    <property type="protein sequence ID" value="AAS96075.1"/>
    <property type="molecule type" value="Genomic_DNA"/>
</dbReference>
<dbReference type="PIR" id="A40347">
    <property type="entry name" value="A40347"/>
</dbReference>
<dbReference type="RefSeq" id="WP_010938888.1">
    <property type="nucleotide sequence ID" value="NC_002937.3"/>
</dbReference>
<dbReference type="RefSeq" id="YP_010816.1">
    <property type="nucleotide sequence ID" value="NC_002937.3"/>
</dbReference>
<dbReference type="SMR" id="Q05805"/>
<dbReference type="STRING" id="882.DVU_1597"/>
<dbReference type="PaxDb" id="882-DVU_1597"/>
<dbReference type="EnsemblBacteria" id="AAS96075">
    <property type="protein sequence ID" value="AAS96075"/>
    <property type="gene ID" value="DVU_1597"/>
</dbReference>
<dbReference type="KEGG" id="dvu:DVU_1597"/>
<dbReference type="PATRIC" id="fig|882.5.peg.1472"/>
<dbReference type="eggNOG" id="COG1251">
    <property type="taxonomic scope" value="Bacteria"/>
</dbReference>
<dbReference type="HOGENOM" id="CLU_072599_0_0_7"/>
<dbReference type="OrthoDB" id="9768666at2"/>
<dbReference type="PhylomeDB" id="Q05805"/>
<dbReference type="Proteomes" id="UP000002194">
    <property type="component" value="Chromosome"/>
</dbReference>
<dbReference type="GO" id="GO:0051539">
    <property type="term" value="F:4 iron, 4 sulfur cluster binding"/>
    <property type="evidence" value="ECO:0007669"/>
    <property type="project" value="UniProtKB-KW"/>
</dbReference>
<dbReference type="GO" id="GO:0020037">
    <property type="term" value="F:heme binding"/>
    <property type="evidence" value="ECO:0007669"/>
    <property type="project" value="InterPro"/>
</dbReference>
<dbReference type="GO" id="GO:0046872">
    <property type="term" value="F:metal ion binding"/>
    <property type="evidence" value="ECO:0007669"/>
    <property type="project" value="UniProtKB-KW"/>
</dbReference>
<dbReference type="GO" id="GO:0016491">
    <property type="term" value="F:oxidoreductase activity"/>
    <property type="evidence" value="ECO:0007669"/>
    <property type="project" value="UniProtKB-KW"/>
</dbReference>
<dbReference type="GO" id="GO:0019344">
    <property type="term" value="P:cysteine biosynthetic process"/>
    <property type="evidence" value="ECO:0007669"/>
    <property type="project" value="UniProtKB-KW"/>
</dbReference>
<dbReference type="Gene3D" id="3.30.413.10">
    <property type="entry name" value="Sulfite Reductase Hemoprotein, domain 1"/>
    <property type="match status" value="1"/>
</dbReference>
<dbReference type="InterPro" id="IPR052034">
    <property type="entry name" value="NasD-like"/>
</dbReference>
<dbReference type="InterPro" id="IPR005117">
    <property type="entry name" value="NiRdtase/SiRdtase_haem-b_fer"/>
</dbReference>
<dbReference type="InterPro" id="IPR036136">
    <property type="entry name" value="Nit/Sulf_reduc_fer-like_dom_sf"/>
</dbReference>
<dbReference type="InterPro" id="IPR006067">
    <property type="entry name" value="NO2/SO3_Rdtase_4Fe4S_dom"/>
</dbReference>
<dbReference type="InterPro" id="IPR045854">
    <property type="entry name" value="NO2/SO3_Rdtase_4Fe4S_sf"/>
</dbReference>
<dbReference type="InterPro" id="IPR006066">
    <property type="entry name" value="NO2/SO3_Rdtase_FeS/sirohaem_BS"/>
</dbReference>
<dbReference type="InterPro" id="IPR017220">
    <property type="entry name" value="Sulphite_reductase_assimil"/>
</dbReference>
<dbReference type="PANTHER" id="PTHR43809">
    <property type="entry name" value="NITRITE REDUCTASE (NADH) LARGE SUBUNIT"/>
    <property type="match status" value="1"/>
</dbReference>
<dbReference type="PANTHER" id="PTHR43809:SF1">
    <property type="entry name" value="NITRITE REDUCTASE (NADH) LARGE SUBUNIT"/>
    <property type="match status" value="1"/>
</dbReference>
<dbReference type="Pfam" id="PF01077">
    <property type="entry name" value="NIR_SIR"/>
    <property type="match status" value="1"/>
</dbReference>
<dbReference type="Pfam" id="PF03460">
    <property type="entry name" value="NIR_SIR_ferr"/>
    <property type="match status" value="1"/>
</dbReference>
<dbReference type="PIRSF" id="PIRSF037487">
    <property type="entry name" value="Sulfite_red_assimil"/>
    <property type="match status" value="1"/>
</dbReference>
<dbReference type="PRINTS" id="PR00397">
    <property type="entry name" value="SIROHAEM"/>
</dbReference>
<dbReference type="SUPFAM" id="SSF56014">
    <property type="entry name" value="Nitrite and sulphite reductase 4Fe-4S domain-like"/>
    <property type="match status" value="1"/>
</dbReference>
<dbReference type="SUPFAM" id="SSF55124">
    <property type="entry name" value="Nitrite/Sulfite reductase N-terminal domain-like"/>
    <property type="match status" value="1"/>
</dbReference>
<dbReference type="PROSITE" id="PS00365">
    <property type="entry name" value="NIR_SIR"/>
    <property type="match status" value="1"/>
</dbReference>
<proteinExistence type="predicted"/>
<reference key="1">
    <citation type="journal article" date="1991" name="Biochemistry">
        <title>Primary structure of the assimilatory-type sulfite reductase from Desulfovibrio vulgaris (Hildenborough): cloning and nucleotide sequence of the reductase gene.</title>
        <authorList>
            <person name="Tan J."/>
            <person name="Helms L.R."/>
            <person name="Swenson R.P."/>
            <person name="Cowan J.A."/>
        </authorList>
    </citation>
    <scope>NUCLEOTIDE SEQUENCE [GENOMIC DNA]</scope>
</reference>
<reference key="2">
    <citation type="journal article" date="2004" name="Nat. Biotechnol.">
        <title>The genome sequence of the anaerobic, sulfate-reducing bacterium Desulfovibrio vulgaris Hildenborough.</title>
        <authorList>
            <person name="Heidelberg J.F."/>
            <person name="Seshadri R."/>
            <person name="Haveman S.A."/>
            <person name="Hemme C.L."/>
            <person name="Paulsen I.T."/>
            <person name="Kolonay J.F."/>
            <person name="Eisen J.A."/>
            <person name="Ward N.L."/>
            <person name="Methe B.A."/>
            <person name="Brinkac L.M."/>
            <person name="Daugherty S.C."/>
            <person name="DeBoy R.T."/>
            <person name="Dodson R.J."/>
            <person name="Durkin A.S."/>
            <person name="Madupu R."/>
            <person name="Nelson W.C."/>
            <person name="Sullivan S.A."/>
            <person name="Fouts D.E."/>
            <person name="Haft D.H."/>
            <person name="Selengut J."/>
            <person name="Peterson J.D."/>
            <person name="Davidsen T.M."/>
            <person name="Zafar N."/>
            <person name="Zhou L."/>
            <person name="Radune D."/>
            <person name="Dimitrov G."/>
            <person name="Hance M."/>
            <person name="Tran K."/>
            <person name="Khouri H.M."/>
            <person name="Gill J."/>
            <person name="Utterback T.R."/>
            <person name="Feldblyum T.V."/>
            <person name="Wall J.D."/>
            <person name="Voordouw G."/>
            <person name="Fraser C.M."/>
        </authorList>
    </citation>
    <scope>NUCLEOTIDE SEQUENCE [LARGE SCALE GENOMIC DNA]</scope>
    <source>
        <strain>ATCC 29579 / DSM 644 / CCUG 34227 / NCIMB 8303 / VKM B-1760 / Hildenborough</strain>
    </source>
</reference>
<organism>
    <name type="scientific">Nitratidesulfovibrio vulgaris (strain ATCC 29579 / DSM 644 / CCUG 34227 / NCIMB 8303 / VKM B-1760 / Hildenborough)</name>
    <name type="common">Desulfovibrio vulgaris</name>
    <dbReference type="NCBI Taxonomy" id="882"/>
    <lineage>
        <taxon>Bacteria</taxon>
        <taxon>Pseudomonadati</taxon>
        <taxon>Thermodesulfobacteriota</taxon>
        <taxon>Desulfovibrionia</taxon>
        <taxon>Desulfovibrionales</taxon>
        <taxon>Desulfovibrionaceae</taxon>
        <taxon>Nitratidesulfovibrio</taxon>
    </lineage>
</organism>
<feature type="chain" id="PRO_0000199967" description="Sulfite reductase, assimilatory-type">
    <location>
        <begin position="1"/>
        <end position="218"/>
    </location>
</feature>
<feature type="binding site" evidence="1">
    <location>
        <position position="91"/>
    </location>
    <ligand>
        <name>[4Fe-4S] cluster</name>
        <dbReference type="ChEBI" id="CHEBI:49883"/>
    </ligand>
</feature>
<feature type="binding site" evidence="1">
    <location>
        <position position="97"/>
    </location>
    <ligand>
        <name>[4Fe-4S] cluster</name>
        <dbReference type="ChEBI" id="CHEBI:49883"/>
    </ligand>
</feature>
<feature type="binding site" evidence="1">
    <location>
        <position position="131"/>
    </location>
    <ligand>
        <name>[4Fe-4S] cluster</name>
        <dbReference type="ChEBI" id="CHEBI:49883"/>
    </ligand>
</feature>
<feature type="binding site" evidence="1">
    <location>
        <position position="135"/>
    </location>
    <ligand>
        <name>[4Fe-4S] cluster</name>
        <dbReference type="ChEBI" id="CHEBI:49883"/>
    </ligand>
</feature>
<feature type="binding site" description="axial binding residue" evidence="1">
    <location>
        <position position="135"/>
    </location>
    <ligand>
        <name>siroheme</name>
        <dbReference type="ChEBI" id="CHEBI:60052"/>
    </ligand>
    <ligandPart>
        <name>Fe</name>
        <dbReference type="ChEBI" id="CHEBI:18248"/>
    </ligandPart>
</feature>
<feature type="sequence conflict" description="In Ref. 1; AAA23383." evidence="2" ref="1">
    <original>S</original>
    <variation>T</variation>
    <location>
        <position position="138"/>
    </location>
</feature>
<name>SIR_NITV2</name>
<protein>
    <recommendedName>
        <fullName>Sulfite reductase, assimilatory-type</fullName>
        <ecNumber>1.8.-.-</ecNumber>
    </recommendedName>
</protein>
<accession>Q05805</accession>
<sequence length="218" mass="23845">MSDEPKGAILQRDKLTYAIVPRTPCGLLTPDVLDAVSRVCRKYEVPIIKITSGQRLALVGMKKEAVEPMWEELRLDVGRAVELCVHYVQACPGTAVCRFGLQDSLGIGVAIEEEYVGHDFPAKVKFGISGCPFCCGESYLRDVGLVGTKKGWTLIVGGNSGGHPRIGDVLAEELSTDEAKGLIRKFMEFYRDNSGKRLRVSKFVEKTGIEAIRQAVLG</sequence>
<comment type="function">
    <text>This enzyme catalyzes the 6-electron reduction of sulfite to sulfide. This is one of several activities required for the biosynthesis of L-cysteine from sulfate.</text>
</comment>
<keyword id="KW-0004">4Fe-4S</keyword>
<keyword id="KW-0028">Amino-acid biosynthesis</keyword>
<keyword id="KW-0198">Cysteine biosynthesis</keyword>
<keyword id="KW-0349">Heme</keyword>
<keyword id="KW-0408">Iron</keyword>
<keyword id="KW-0411">Iron-sulfur</keyword>
<keyword id="KW-0479">Metal-binding</keyword>
<keyword id="KW-0521">NADP</keyword>
<keyword id="KW-0560">Oxidoreductase</keyword>
<keyword id="KW-1185">Reference proteome</keyword>
<evidence type="ECO:0000250" key="1"/>
<evidence type="ECO:0000305" key="2"/>